<dbReference type="EMBL" id="Y19185">
    <property type="protein sequence ID" value="CAB60731.2"/>
    <property type="status" value="ALT_SEQ"/>
    <property type="molecule type" value="mRNA"/>
</dbReference>
<dbReference type="EMBL" id="Y19186">
    <property type="protein sequence ID" value="CAB60732.2"/>
    <property type="status" value="ALT_SEQ"/>
    <property type="molecule type" value="mRNA"/>
</dbReference>
<dbReference type="EMBL" id="AB083477">
    <property type="protein sequence ID" value="BAC53723.1"/>
    <property type="status" value="ALT_SEQ"/>
    <property type="molecule type" value="mRNA"/>
</dbReference>
<dbReference type="EMBL" id="AB083478">
    <property type="protein sequence ID" value="BAC53724.1"/>
    <property type="status" value="ALT_SEQ"/>
    <property type="molecule type" value="mRNA"/>
</dbReference>
<dbReference type="EMBL" id="AC125043">
    <property type="status" value="NOT_ANNOTATED_CDS"/>
    <property type="molecule type" value="Genomic_DNA"/>
</dbReference>
<dbReference type="EMBL" id="AC125533">
    <property type="status" value="NOT_ANNOTATED_CDS"/>
    <property type="molecule type" value="Genomic_DNA"/>
</dbReference>
<dbReference type="EMBL" id="AC144480">
    <property type="status" value="NOT_ANNOTATED_CDS"/>
    <property type="molecule type" value="Genomic_DNA"/>
</dbReference>
<dbReference type="EMBL" id="AC144625">
    <property type="status" value="NOT_ANNOTATED_CDS"/>
    <property type="molecule type" value="Genomic_DNA"/>
</dbReference>
<dbReference type="EMBL" id="AF181269">
    <property type="protein sequence ID" value="AAD55786.2"/>
    <property type="molecule type" value="mRNA"/>
</dbReference>
<dbReference type="CCDS" id="CCDS51415.1">
    <molecule id="Q9QYX7-1"/>
</dbReference>
<dbReference type="CCDS" id="CCDS59667.1">
    <molecule id="Q9QYX7-2"/>
</dbReference>
<dbReference type="RefSeq" id="NP_001104266.1">
    <molecule id="Q9QYX7-2"/>
    <property type="nucleotide sequence ID" value="NM_001110796.2"/>
</dbReference>
<dbReference type="RefSeq" id="NP_036125.4">
    <molecule id="Q9QYX7-1"/>
    <property type="nucleotide sequence ID" value="NM_011995.4"/>
</dbReference>
<dbReference type="SMR" id="Q9QYX7"/>
<dbReference type="BioGRID" id="205033">
    <property type="interactions" value="19"/>
</dbReference>
<dbReference type="FunCoup" id="Q9QYX7">
    <property type="interactions" value="752"/>
</dbReference>
<dbReference type="IntAct" id="Q9QYX7">
    <property type="interactions" value="3"/>
</dbReference>
<dbReference type="MINT" id="Q9QYX7"/>
<dbReference type="STRING" id="10090.ENSMUSP00000030691"/>
<dbReference type="GlyCosmos" id="Q9QYX7">
    <property type="glycosylation" value="2 sites, No reported glycans"/>
</dbReference>
<dbReference type="GlyGen" id="Q9QYX7">
    <property type="glycosylation" value="147 sites, 1 N-linked glycan (1 site), 1 O-linked glycan (131 sites)"/>
</dbReference>
<dbReference type="iPTMnet" id="Q9QYX7"/>
<dbReference type="PhosphoSitePlus" id="Q9QYX7"/>
<dbReference type="SwissPalm" id="Q9QYX7"/>
<dbReference type="jPOST" id="Q9QYX7"/>
<dbReference type="PaxDb" id="10090-ENSMUSP00000030691"/>
<dbReference type="PeptideAtlas" id="Q9QYX7"/>
<dbReference type="ProteomicsDB" id="289327">
    <molecule id="Q9QYX7-1"/>
</dbReference>
<dbReference type="ProteomicsDB" id="289328">
    <molecule id="Q9QYX7-2"/>
</dbReference>
<dbReference type="Antibodypedia" id="2812">
    <property type="antibodies" value="258 antibodies from 23 providers"/>
</dbReference>
<dbReference type="DNASU" id="26875"/>
<dbReference type="Ensembl" id="ENSMUST00000030691.17">
    <molecule id="Q9QYX7-1"/>
    <property type="protein sequence ID" value="ENSMUSP00000030691.10"/>
    <property type="gene ID" value="ENSMUSG00000061601.16"/>
</dbReference>
<dbReference type="Ensembl" id="ENSMUST00000182407.8">
    <molecule id="Q9QYX7-2"/>
    <property type="protein sequence ID" value="ENSMUSP00000138419.2"/>
    <property type="gene ID" value="ENSMUSG00000061601.16"/>
</dbReference>
<dbReference type="GeneID" id="26875"/>
<dbReference type="KEGG" id="mmu:26875"/>
<dbReference type="UCSC" id="uc008wmh.3">
    <molecule id="Q9QYX7-2"/>
    <property type="organism name" value="mouse"/>
</dbReference>
<dbReference type="UCSC" id="uc008wmi.2">
    <molecule id="Q9QYX7-1"/>
    <property type="organism name" value="mouse"/>
</dbReference>
<dbReference type="AGR" id="MGI:1349390"/>
<dbReference type="CTD" id="27445"/>
<dbReference type="MGI" id="MGI:1349390">
    <property type="gene designation" value="Pclo"/>
</dbReference>
<dbReference type="VEuPathDB" id="HostDB:ENSMUSG00000061601"/>
<dbReference type="eggNOG" id="KOG2060">
    <property type="taxonomic scope" value="Eukaryota"/>
</dbReference>
<dbReference type="GeneTree" id="ENSGT00620000087961"/>
<dbReference type="HOGENOM" id="CLU_000104_0_1_1"/>
<dbReference type="InParanoid" id="Q9QYX7"/>
<dbReference type="OMA" id="KVTTDHK"/>
<dbReference type="OrthoDB" id="67700at2759"/>
<dbReference type="PhylomeDB" id="Q9QYX7"/>
<dbReference type="BioGRID-ORCS" id="26875">
    <property type="hits" value="4 hits in 79 CRISPR screens"/>
</dbReference>
<dbReference type="CD-CODE" id="CE726F99">
    <property type="entry name" value="Postsynaptic density"/>
</dbReference>
<dbReference type="ChiTaRS" id="Pclo">
    <property type="organism name" value="mouse"/>
</dbReference>
<dbReference type="PRO" id="PR:Q9QYX7"/>
<dbReference type="Proteomes" id="UP000000589">
    <property type="component" value="Chromosome 5"/>
</dbReference>
<dbReference type="RNAct" id="Q9QYX7">
    <property type="molecule type" value="protein"/>
</dbReference>
<dbReference type="Bgee" id="ENSMUSG00000061601">
    <property type="expression patterns" value="Expressed in cingulate cortex and 151 other cell types or tissues"/>
</dbReference>
<dbReference type="ExpressionAtlas" id="Q9QYX7">
    <property type="expression patterns" value="baseline and differential"/>
</dbReference>
<dbReference type="GO" id="GO:0042995">
    <property type="term" value="C:cell projection"/>
    <property type="evidence" value="ECO:0007669"/>
    <property type="project" value="UniProtKB-KW"/>
</dbReference>
<dbReference type="GO" id="GO:0014069">
    <property type="term" value="C:postsynaptic density"/>
    <property type="evidence" value="ECO:0000314"/>
    <property type="project" value="MGI"/>
</dbReference>
<dbReference type="GO" id="GO:0048786">
    <property type="term" value="C:presynaptic active zone"/>
    <property type="evidence" value="ECO:0007669"/>
    <property type="project" value="UniProtKB-SubCell"/>
</dbReference>
<dbReference type="GO" id="GO:0045202">
    <property type="term" value="C:synapse"/>
    <property type="evidence" value="ECO:0000314"/>
    <property type="project" value="UniProtKB"/>
</dbReference>
<dbReference type="GO" id="GO:0005509">
    <property type="term" value="F:calcium ion binding"/>
    <property type="evidence" value="ECO:0000250"/>
    <property type="project" value="UniProtKB"/>
</dbReference>
<dbReference type="GO" id="GO:0005544">
    <property type="term" value="F:calcium-dependent phospholipid binding"/>
    <property type="evidence" value="ECO:0000250"/>
    <property type="project" value="UniProtKB"/>
</dbReference>
<dbReference type="GO" id="GO:0005522">
    <property type="term" value="F:profilin binding"/>
    <property type="evidence" value="ECO:0000314"/>
    <property type="project" value="UniProtKB"/>
</dbReference>
<dbReference type="GO" id="GO:0098882">
    <property type="term" value="F:structural constituent of presynaptic active zone"/>
    <property type="evidence" value="ECO:0000314"/>
    <property type="project" value="SynGO"/>
</dbReference>
<dbReference type="GO" id="GO:0008270">
    <property type="term" value="F:zinc ion binding"/>
    <property type="evidence" value="ECO:0007669"/>
    <property type="project" value="UniProtKB-KW"/>
</dbReference>
<dbReference type="GO" id="GO:0007010">
    <property type="term" value="P:cytoskeleton organization"/>
    <property type="evidence" value="ECO:0000314"/>
    <property type="project" value="MGI"/>
</dbReference>
<dbReference type="GO" id="GO:0030073">
    <property type="term" value="P:insulin secretion"/>
    <property type="evidence" value="ECO:0000314"/>
    <property type="project" value="MGI"/>
</dbReference>
<dbReference type="GO" id="GO:0099140">
    <property type="term" value="P:presynaptic actin cytoskeleton organization"/>
    <property type="evidence" value="ECO:0000314"/>
    <property type="project" value="SynGO"/>
</dbReference>
<dbReference type="GO" id="GO:0035418">
    <property type="term" value="P:protein localization to synapse"/>
    <property type="evidence" value="ECO:0000316"/>
    <property type="project" value="ParkinsonsUK-UCL"/>
</dbReference>
<dbReference type="GO" id="GO:0017157">
    <property type="term" value="P:regulation of exocytosis"/>
    <property type="evidence" value="ECO:0000314"/>
    <property type="project" value="MGI"/>
</dbReference>
<dbReference type="GO" id="GO:0097091">
    <property type="term" value="P:synaptic vesicle clustering"/>
    <property type="evidence" value="ECO:0000314"/>
    <property type="project" value="SynGO"/>
</dbReference>
<dbReference type="GO" id="GO:0016080">
    <property type="term" value="P:synaptic vesicle targeting"/>
    <property type="evidence" value="ECO:0000303"/>
    <property type="project" value="UniProtKB"/>
</dbReference>
<dbReference type="CDD" id="cd04031">
    <property type="entry name" value="C2A_RIM1alpha"/>
    <property type="match status" value="1"/>
</dbReference>
<dbReference type="CDD" id="cd15774">
    <property type="entry name" value="FYVE1_PCLO"/>
    <property type="match status" value="1"/>
</dbReference>
<dbReference type="CDD" id="cd15776">
    <property type="entry name" value="FYVE2_PCLO"/>
    <property type="match status" value="1"/>
</dbReference>
<dbReference type="CDD" id="cd06714">
    <property type="entry name" value="PDZ_RIM-like"/>
    <property type="match status" value="1"/>
</dbReference>
<dbReference type="FunFam" id="3.30.40.10:FF:000326">
    <property type="entry name" value="Bassoon presynaptic cytomatrix protein"/>
    <property type="match status" value="1"/>
</dbReference>
<dbReference type="FunFam" id="2.30.42.10:FF:000126">
    <property type="entry name" value="Piccolo presynaptic cytomatrix protein"/>
    <property type="match status" value="1"/>
</dbReference>
<dbReference type="FunFam" id="2.60.40.150:FF:000137">
    <property type="entry name" value="Piccolo presynaptic cytomatrix protein"/>
    <property type="match status" value="1"/>
</dbReference>
<dbReference type="FunFam" id="2.60.40.150:FF:000149">
    <property type="entry name" value="Piccolo presynaptic cytomatrix protein"/>
    <property type="match status" value="1"/>
</dbReference>
<dbReference type="FunFam" id="3.30.40.10:FF:000563">
    <property type="entry name" value="Piccolo presynaptic cytomatrix protein"/>
    <property type="match status" value="1"/>
</dbReference>
<dbReference type="Gene3D" id="2.30.42.10">
    <property type="match status" value="1"/>
</dbReference>
<dbReference type="Gene3D" id="2.60.40.150">
    <property type="entry name" value="C2 domain"/>
    <property type="match status" value="2"/>
</dbReference>
<dbReference type="Gene3D" id="3.30.40.10">
    <property type="entry name" value="Zinc/RING finger domain, C3HC4 (zinc finger)"/>
    <property type="match status" value="2"/>
</dbReference>
<dbReference type="InterPro" id="IPR000008">
    <property type="entry name" value="C2_dom"/>
</dbReference>
<dbReference type="InterPro" id="IPR035892">
    <property type="entry name" value="C2_domain_sf"/>
</dbReference>
<dbReference type="InterPro" id="IPR042720">
    <property type="entry name" value="PCLO_FYVE1"/>
</dbReference>
<dbReference type="InterPro" id="IPR001478">
    <property type="entry name" value="PDZ"/>
</dbReference>
<dbReference type="InterPro" id="IPR036034">
    <property type="entry name" value="PDZ_sf"/>
</dbReference>
<dbReference type="InterPro" id="IPR052098">
    <property type="entry name" value="Presynaptic_Scaffold_Bsn/Pclo"/>
</dbReference>
<dbReference type="InterPro" id="IPR011011">
    <property type="entry name" value="Znf_FYVE_PHD"/>
</dbReference>
<dbReference type="InterPro" id="IPR008899">
    <property type="entry name" value="Znf_piccolo"/>
</dbReference>
<dbReference type="InterPro" id="IPR013083">
    <property type="entry name" value="Znf_RING/FYVE/PHD"/>
</dbReference>
<dbReference type="PANTHER" id="PTHR14113">
    <property type="entry name" value="PICCOLO/BASSOON"/>
    <property type="match status" value="1"/>
</dbReference>
<dbReference type="PANTHER" id="PTHR14113:SF6">
    <property type="entry name" value="PROTEIN PICCOLO"/>
    <property type="match status" value="1"/>
</dbReference>
<dbReference type="Pfam" id="PF00168">
    <property type="entry name" value="C2"/>
    <property type="match status" value="2"/>
</dbReference>
<dbReference type="Pfam" id="PF00595">
    <property type="entry name" value="PDZ"/>
    <property type="match status" value="1"/>
</dbReference>
<dbReference type="Pfam" id="PF05715">
    <property type="entry name" value="zf-piccolo"/>
    <property type="match status" value="2"/>
</dbReference>
<dbReference type="SMART" id="SM00239">
    <property type="entry name" value="C2"/>
    <property type="match status" value="2"/>
</dbReference>
<dbReference type="SMART" id="SM00228">
    <property type="entry name" value="PDZ"/>
    <property type="match status" value="1"/>
</dbReference>
<dbReference type="SUPFAM" id="SSF49562">
    <property type="entry name" value="C2 domain (Calcium/lipid-binding domain, CaLB)"/>
    <property type="match status" value="2"/>
</dbReference>
<dbReference type="SUPFAM" id="SSF57903">
    <property type="entry name" value="FYVE/PHD zinc finger"/>
    <property type="match status" value="2"/>
</dbReference>
<dbReference type="SUPFAM" id="SSF50156">
    <property type="entry name" value="PDZ domain-like"/>
    <property type="match status" value="1"/>
</dbReference>
<dbReference type="PROSITE" id="PS50004">
    <property type="entry name" value="C2"/>
    <property type="match status" value="2"/>
</dbReference>
<dbReference type="PROSITE" id="PS50106">
    <property type="entry name" value="PDZ"/>
    <property type="match status" value="1"/>
</dbReference>
<keyword id="KW-0025">Alternative splicing</keyword>
<keyword id="KW-0106">Calcium</keyword>
<keyword id="KW-0111">Calcium/phospholipid-binding</keyword>
<keyword id="KW-0966">Cell projection</keyword>
<keyword id="KW-0325">Glycoprotein</keyword>
<keyword id="KW-0479">Metal-binding</keyword>
<keyword id="KW-0597">Phosphoprotein</keyword>
<keyword id="KW-1185">Reference proteome</keyword>
<keyword id="KW-0677">Repeat</keyword>
<keyword id="KW-0770">Synapse</keyword>
<keyword id="KW-0862">Zinc</keyword>
<keyword id="KW-0863">Zinc-finger</keyword>
<comment type="function">
    <text evidence="1 9 10">Scaffold protein of the presynaptic cytomatrix at the active zone (CAZ) which is the place in the synapse where neurotransmitter is released (PubMed:19812333). After synthesis, participates in the formation of Golgi-derived membranous organelles termed Piccolo-Bassoon transport vesicles (PTVs) that are transported along axons to sites of nascent synaptic contacts (By similarity). At the presynaptic active zone, regulates the spatial organization of synaptic vesicle cluster, the protein complexes that execute membrane fusion and compensatory endocytosis (By similarity). Organizes as well the readily releasable pool of synaptic vesicles and safeguards a fraction of them to be not immediately available for action potential-induced release (By similarity). Also functions in processes other than assembly such as the regulation of specific presynaptic protein ubiquitination by interacting with SIAH1 or the regulation of presynaptic autophagy (By similarity) (PubMed:28231469). Also mediates synapse to nucleus communication leading to reconfiguration of gene expression by associating with the transcriptional corepressor CTBP1 and by subsequently reducing the size of its pool available for nuclear import (By similarity).</text>
</comment>
<comment type="cofactor">
    <cofactor evidence="3">
        <name>Ca(2+)</name>
        <dbReference type="ChEBI" id="CHEBI:29108"/>
    </cofactor>
    <text evidence="3">Binds 3 Ca(2+) ions per C2 domain.</text>
</comment>
<comment type="subunit">
    <text evidence="1 6 7">Interacts with BSN, ERC2/CAST1, RIMS1 and UNC13A (PubMed:10508862, PubMed:12401793). Interacts (via C-terminus) with TRIO (via N-terminus) (By similarity). Interacts with CTBP1 (By similarity). Interacts with SIAH1; this interaction negatively regulates SIAH1 E3 ligase activity (By similarity). Directly interacts with GIT1 and GIT2 (By similarity).</text>
</comment>
<comment type="subcellular location">
    <subcellularLocation>
        <location evidence="6">Presynaptic active zone</location>
    </subcellularLocation>
    <text evidence="1">Colocalizes with BSN in developing axons.</text>
</comment>
<comment type="alternative products">
    <event type="alternative splicing"/>
    <isoform>
        <id>Q9QYX7-1</id>
        <name>1</name>
        <name>L</name>
        <sequence type="displayed"/>
    </isoform>
    <isoform>
        <id>Q9QYX7-2</id>
        <name>2</name>
        <name>S</name>
        <sequence type="described" ref="VSP_003928 VSP_003929"/>
    </isoform>
</comment>
<comment type="tissue specificity">
    <text evidence="6 7 9">Highly expressed in brain. Moderately expressed in pituitary gland and pancreatic islets. Low levels found in stomach.</text>
</comment>
<comment type="domain">
    <text evidence="1">C2 domain 1 is involved in binding calcium and phospholipids. Calcium binds with low affinity but with high specificity and induces a large conformational change.</text>
</comment>
<comment type="disruption phenotype">
    <text evidence="10">Knockdown of both Bassoon/BSN and Piccolo/PCLO leads to the formation of presynaptic autophagosomes.</text>
</comment>
<comment type="sequence caution" evidence="13">
    <conflict type="miscellaneous discrepancy">
        <sequence resource="EMBL-CDS" id="BAC53723"/>
    </conflict>
    <text>Unlikely isoform. Several sequence problems.</text>
</comment>
<comment type="sequence caution" evidence="13">
    <conflict type="miscellaneous discrepancy">
        <sequence resource="EMBL-CDS" id="BAC53724"/>
    </conflict>
    <text>Unlikely isoform. Several sequence problems.</text>
</comment>
<comment type="sequence caution" evidence="13">
    <conflict type="miscellaneous discrepancy">
        <sequence resource="EMBL-CDS" id="CAB60731"/>
    </conflict>
    <text>Probable cloning artifact.</text>
</comment>
<comment type="sequence caution" evidence="13">
    <conflict type="miscellaneous discrepancy">
        <sequence resource="EMBL-CDS" id="CAB60732"/>
    </conflict>
    <text>Probable cloning artifact.</text>
</comment>
<gene>
    <name evidence="15" type="primary">Pclo</name>
    <name evidence="11" type="synonym">Acz</name>
</gene>
<protein>
    <recommendedName>
        <fullName evidence="13">Protein piccolo</fullName>
    </recommendedName>
    <alternativeName>
        <fullName evidence="11">Aczonin</fullName>
    </alternativeName>
    <alternativeName>
        <fullName>Brain-derived HLMN protein</fullName>
    </alternativeName>
    <alternativeName>
        <fullName>Multidomain presynaptic cytomatrix protein</fullName>
    </alternativeName>
</protein>
<feature type="chain" id="PRO_0000058251" description="Protein piccolo">
    <location>
        <begin position="1"/>
        <end position="5068"/>
    </location>
</feature>
<feature type="domain" description="PDZ" evidence="4">
    <location>
        <begin position="4424"/>
        <end position="4518"/>
    </location>
</feature>
<feature type="domain" description="C2 1" evidence="3">
    <location>
        <begin position="4622"/>
        <end position="4751"/>
    </location>
</feature>
<feature type="domain" description="C2 2" evidence="3">
    <location>
        <begin position="4933"/>
        <end position="5058"/>
    </location>
</feature>
<feature type="zinc finger region" description="C4-type" evidence="2">
    <location>
        <begin position="532"/>
        <end position="556"/>
    </location>
</feature>
<feature type="zinc finger region" description="C4-type" evidence="2">
    <location>
        <begin position="997"/>
        <end position="1020"/>
    </location>
</feature>
<feature type="region of interest" description="Disordered" evidence="5">
    <location>
        <begin position="1"/>
        <end position="143"/>
    </location>
</feature>
<feature type="region of interest" description="Disordered" evidence="5">
    <location>
        <begin position="173"/>
        <end position="524"/>
    </location>
</feature>
<feature type="region of interest" description="10 X 10 AA tandem approximate repeats of P-A-K-P-Q-P-Q-Q-P-X">
    <location>
        <begin position="401"/>
        <end position="500"/>
    </location>
</feature>
<feature type="region of interest" description="Disordered" evidence="5">
    <location>
        <begin position="594"/>
        <end position="867"/>
    </location>
</feature>
<feature type="region of interest" description="Disordered" evidence="5">
    <location>
        <begin position="883"/>
        <end position="1005"/>
    </location>
</feature>
<feature type="region of interest" description="Disordered" evidence="5">
    <location>
        <begin position="1057"/>
        <end position="1345"/>
    </location>
</feature>
<feature type="region of interest" description="Disordered" evidence="5">
    <location>
        <begin position="1364"/>
        <end position="1803"/>
    </location>
</feature>
<feature type="region of interest" description="Disordered" evidence="5">
    <location>
        <begin position="2104"/>
        <end position="2126"/>
    </location>
</feature>
<feature type="region of interest" description="Disordered" evidence="5">
    <location>
        <begin position="2261"/>
        <end position="2377"/>
    </location>
</feature>
<feature type="region of interest" description="Disordered" evidence="5">
    <location>
        <begin position="3334"/>
        <end position="3443"/>
    </location>
</feature>
<feature type="region of interest" description="Disordered" evidence="5">
    <location>
        <begin position="3490"/>
        <end position="3556"/>
    </location>
</feature>
<feature type="region of interest" description="Disordered" evidence="5">
    <location>
        <begin position="3576"/>
        <end position="3679"/>
    </location>
</feature>
<feature type="region of interest" description="Disordered" evidence="5">
    <location>
        <begin position="3760"/>
        <end position="3797"/>
    </location>
</feature>
<feature type="region of interest" description="Disordered" evidence="5">
    <location>
        <begin position="4207"/>
        <end position="4231"/>
    </location>
</feature>
<feature type="region of interest" description="Disordered" evidence="5">
    <location>
        <begin position="4254"/>
        <end position="4273"/>
    </location>
</feature>
<feature type="region of interest" description="Disordered" evidence="5">
    <location>
        <begin position="4317"/>
        <end position="4339"/>
    </location>
</feature>
<feature type="region of interest" description="Disordered" evidence="5">
    <location>
        <begin position="4574"/>
        <end position="4620"/>
    </location>
</feature>
<feature type="region of interest" description="Disordered" evidence="5">
    <location>
        <begin position="4758"/>
        <end position="4834"/>
    </location>
</feature>
<feature type="region of interest" description="Disordered" evidence="5">
    <location>
        <begin position="4857"/>
        <end position="4891"/>
    </location>
</feature>
<feature type="compositionally biased region" description="Low complexity" evidence="5">
    <location>
        <begin position="1"/>
        <end position="20"/>
    </location>
</feature>
<feature type="compositionally biased region" description="Pro residues" evidence="5">
    <location>
        <begin position="93"/>
        <end position="102"/>
    </location>
</feature>
<feature type="compositionally biased region" description="Basic and acidic residues" evidence="5">
    <location>
        <begin position="111"/>
        <end position="122"/>
    </location>
</feature>
<feature type="compositionally biased region" description="Basic and acidic residues" evidence="5">
    <location>
        <begin position="133"/>
        <end position="143"/>
    </location>
</feature>
<feature type="compositionally biased region" description="Basic and acidic residues" evidence="5">
    <location>
        <begin position="185"/>
        <end position="199"/>
    </location>
</feature>
<feature type="compositionally biased region" description="Polar residues" evidence="5">
    <location>
        <begin position="232"/>
        <end position="241"/>
    </location>
</feature>
<feature type="compositionally biased region" description="Low complexity" evidence="5">
    <location>
        <begin position="252"/>
        <end position="279"/>
    </location>
</feature>
<feature type="compositionally biased region" description="Polar residues" evidence="5">
    <location>
        <begin position="319"/>
        <end position="334"/>
    </location>
</feature>
<feature type="compositionally biased region" description="Pro residues" evidence="5">
    <location>
        <begin position="391"/>
        <end position="407"/>
    </location>
</feature>
<feature type="compositionally biased region" description="Pro residues" evidence="5">
    <location>
        <begin position="416"/>
        <end position="487"/>
    </location>
</feature>
<feature type="compositionally biased region" description="Polar residues" evidence="5">
    <location>
        <begin position="495"/>
        <end position="508"/>
    </location>
</feature>
<feature type="compositionally biased region" description="Low complexity" evidence="5">
    <location>
        <begin position="515"/>
        <end position="524"/>
    </location>
</feature>
<feature type="compositionally biased region" description="Polar residues" evidence="5">
    <location>
        <begin position="610"/>
        <end position="625"/>
    </location>
</feature>
<feature type="compositionally biased region" description="Basic and acidic residues" evidence="5">
    <location>
        <begin position="626"/>
        <end position="644"/>
    </location>
</feature>
<feature type="compositionally biased region" description="Low complexity" evidence="5">
    <location>
        <begin position="709"/>
        <end position="738"/>
    </location>
</feature>
<feature type="compositionally biased region" description="Basic and acidic residues" evidence="5">
    <location>
        <begin position="782"/>
        <end position="795"/>
    </location>
</feature>
<feature type="compositionally biased region" description="Low complexity" evidence="5">
    <location>
        <begin position="809"/>
        <end position="830"/>
    </location>
</feature>
<feature type="compositionally biased region" description="Polar residues" evidence="5">
    <location>
        <begin position="856"/>
        <end position="865"/>
    </location>
</feature>
<feature type="compositionally biased region" description="Polar residues" evidence="5">
    <location>
        <begin position="883"/>
        <end position="893"/>
    </location>
</feature>
<feature type="compositionally biased region" description="Pro residues" evidence="5">
    <location>
        <begin position="1073"/>
        <end position="1085"/>
    </location>
</feature>
<feature type="compositionally biased region" description="Basic and acidic residues" evidence="5">
    <location>
        <begin position="1097"/>
        <end position="1116"/>
    </location>
</feature>
<feature type="compositionally biased region" description="Basic and acidic residues" evidence="5">
    <location>
        <begin position="1144"/>
        <end position="1165"/>
    </location>
</feature>
<feature type="compositionally biased region" description="Basic and acidic residues" evidence="5">
    <location>
        <begin position="1172"/>
        <end position="1186"/>
    </location>
</feature>
<feature type="compositionally biased region" description="Basic and acidic residues" evidence="5">
    <location>
        <begin position="1244"/>
        <end position="1253"/>
    </location>
</feature>
<feature type="compositionally biased region" description="Basic and acidic residues" evidence="5">
    <location>
        <begin position="1262"/>
        <end position="1283"/>
    </location>
</feature>
<feature type="compositionally biased region" description="Polar residues" evidence="5">
    <location>
        <begin position="1290"/>
        <end position="1306"/>
    </location>
</feature>
<feature type="compositionally biased region" description="Basic and acidic residues" evidence="5">
    <location>
        <begin position="1319"/>
        <end position="1333"/>
    </location>
</feature>
<feature type="compositionally biased region" description="Low complexity" evidence="5">
    <location>
        <begin position="1334"/>
        <end position="1343"/>
    </location>
</feature>
<feature type="compositionally biased region" description="Polar residues" evidence="5">
    <location>
        <begin position="1374"/>
        <end position="1392"/>
    </location>
</feature>
<feature type="compositionally biased region" description="Basic and acidic residues" evidence="5">
    <location>
        <begin position="1405"/>
        <end position="1444"/>
    </location>
</feature>
<feature type="compositionally biased region" description="Acidic residues" evidence="5">
    <location>
        <begin position="1499"/>
        <end position="1511"/>
    </location>
</feature>
<feature type="compositionally biased region" description="Acidic residues" evidence="5">
    <location>
        <begin position="1566"/>
        <end position="1575"/>
    </location>
</feature>
<feature type="compositionally biased region" description="Basic and acidic residues" evidence="5">
    <location>
        <begin position="1576"/>
        <end position="1587"/>
    </location>
</feature>
<feature type="compositionally biased region" description="Polar residues" evidence="5">
    <location>
        <begin position="1606"/>
        <end position="1624"/>
    </location>
</feature>
<feature type="compositionally biased region" description="Acidic residues" evidence="5">
    <location>
        <begin position="1628"/>
        <end position="1638"/>
    </location>
</feature>
<feature type="compositionally biased region" description="Polar residues" evidence="5">
    <location>
        <begin position="1650"/>
        <end position="1667"/>
    </location>
</feature>
<feature type="compositionally biased region" description="Acidic residues" evidence="5">
    <location>
        <begin position="1707"/>
        <end position="1720"/>
    </location>
</feature>
<feature type="compositionally biased region" description="Basic and acidic residues" evidence="5">
    <location>
        <begin position="1721"/>
        <end position="1734"/>
    </location>
</feature>
<feature type="compositionally biased region" description="Basic and acidic residues" evidence="5">
    <location>
        <begin position="1775"/>
        <end position="1790"/>
    </location>
</feature>
<feature type="compositionally biased region" description="Low complexity" evidence="5">
    <location>
        <begin position="2109"/>
        <end position="2126"/>
    </location>
</feature>
<feature type="compositionally biased region" description="Polar residues" evidence="5">
    <location>
        <begin position="2277"/>
        <end position="2291"/>
    </location>
</feature>
<feature type="compositionally biased region" description="Pro residues" evidence="5">
    <location>
        <begin position="2334"/>
        <end position="2368"/>
    </location>
</feature>
<feature type="compositionally biased region" description="Basic and acidic residues" evidence="5">
    <location>
        <begin position="3361"/>
        <end position="3370"/>
    </location>
</feature>
<feature type="compositionally biased region" description="Acidic residues" evidence="5">
    <location>
        <begin position="3403"/>
        <end position="3412"/>
    </location>
</feature>
<feature type="compositionally biased region" description="Polar residues" evidence="5">
    <location>
        <begin position="3495"/>
        <end position="3507"/>
    </location>
</feature>
<feature type="compositionally biased region" description="Polar residues" evidence="5">
    <location>
        <begin position="3636"/>
        <end position="3645"/>
    </location>
</feature>
<feature type="compositionally biased region" description="Polar residues" evidence="5">
    <location>
        <begin position="3661"/>
        <end position="3673"/>
    </location>
</feature>
<feature type="compositionally biased region" description="Basic and acidic residues" evidence="5">
    <location>
        <begin position="3773"/>
        <end position="3785"/>
    </location>
</feature>
<feature type="compositionally biased region" description="Polar residues" evidence="5">
    <location>
        <begin position="3787"/>
        <end position="3797"/>
    </location>
</feature>
<feature type="compositionally biased region" description="Low complexity" evidence="5">
    <location>
        <begin position="4210"/>
        <end position="4231"/>
    </location>
</feature>
<feature type="compositionally biased region" description="Polar residues" evidence="5">
    <location>
        <begin position="4257"/>
        <end position="4273"/>
    </location>
</feature>
<feature type="compositionally biased region" description="Low complexity" evidence="5">
    <location>
        <begin position="4578"/>
        <end position="4601"/>
    </location>
</feature>
<feature type="compositionally biased region" description="Low complexity" evidence="5">
    <location>
        <begin position="4766"/>
        <end position="4778"/>
    </location>
</feature>
<feature type="compositionally biased region" description="Low complexity" evidence="5">
    <location>
        <begin position="4805"/>
        <end position="4815"/>
    </location>
</feature>
<feature type="compositionally biased region" description="Polar residues" evidence="5">
    <location>
        <begin position="4823"/>
        <end position="4834"/>
    </location>
</feature>
<feature type="compositionally biased region" description="Low complexity" evidence="5">
    <location>
        <begin position="4870"/>
        <end position="4891"/>
    </location>
</feature>
<feature type="binding site" evidence="3">
    <location>
        <position position="4651"/>
    </location>
    <ligand>
        <name>Ca(2+)</name>
        <dbReference type="ChEBI" id="CHEBI:29108"/>
        <label>1</label>
    </ligand>
</feature>
<feature type="binding site" evidence="3">
    <location>
        <position position="4651"/>
    </location>
    <ligand>
        <name>Ca(2+)</name>
        <dbReference type="ChEBI" id="CHEBI:29108"/>
        <label>2</label>
    </ligand>
</feature>
<feature type="binding site" evidence="3">
    <location>
        <position position="4657"/>
    </location>
    <ligand>
        <name>Ca(2+)</name>
        <dbReference type="ChEBI" id="CHEBI:29108"/>
        <label>1</label>
    </ligand>
</feature>
<feature type="binding site" evidence="3">
    <location>
        <position position="4721"/>
    </location>
    <ligand>
        <name>Ca(2+)</name>
        <dbReference type="ChEBI" id="CHEBI:29108"/>
        <label>1</label>
    </ligand>
</feature>
<feature type="binding site" evidence="3">
    <location>
        <position position="4721"/>
    </location>
    <ligand>
        <name>Ca(2+)</name>
        <dbReference type="ChEBI" id="CHEBI:29108"/>
        <label>2</label>
    </ligand>
</feature>
<feature type="binding site" evidence="3">
    <location>
        <position position="4723"/>
    </location>
    <ligand>
        <name>Ca(2+)</name>
        <dbReference type="ChEBI" id="CHEBI:29108"/>
        <label>1</label>
    </ligand>
</feature>
<feature type="binding site" evidence="3">
    <location>
        <position position="4723"/>
    </location>
    <ligand>
        <name>Ca(2+)</name>
        <dbReference type="ChEBI" id="CHEBI:29108"/>
        <label>2</label>
    </ligand>
</feature>
<feature type="binding site" evidence="3">
    <location>
        <position position="4723"/>
    </location>
    <ligand>
        <name>Ca(2+)</name>
        <dbReference type="ChEBI" id="CHEBI:29108"/>
        <label>3</label>
    </ligand>
</feature>
<feature type="binding site" evidence="3">
    <location>
        <position position="4726"/>
    </location>
    <ligand>
        <name>Ca(2+)</name>
        <dbReference type="ChEBI" id="CHEBI:29108"/>
        <label>3</label>
    </ligand>
</feature>
<feature type="binding site" evidence="3">
    <location>
        <position position="4729"/>
    </location>
    <ligand>
        <name>Ca(2+)</name>
        <dbReference type="ChEBI" id="CHEBI:29108"/>
        <label>2</label>
    </ligand>
</feature>
<feature type="binding site" evidence="3">
    <location>
        <position position="4729"/>
    </location>
    <ligand>
        <name>Ca(2+)</name>
        <dbReference type="ChEBI" id="CHEBI:29108"/>
        <label>3</label>
    </ligand>
</feature>
<feature type="modified residue" description="Phosphoserine" evidence="17">
    <location>
        <position position="212"/>
    </location>
</feature>
<feature type="modified residue" description="Phosphoserine" evidence="17">
    <location>
        <position position="844"/>
    </location>
</feature>
<feature type="modified residue" description="Phosphoserine" evidence="17">
    <location>
        <position position="856"/>
    </location>
</feature>
<feature type="modified residue" description="Phosphothreonine" evidence="17">
    <location>
        <position position="860"/>
    </location>
</feature>
<feature type="modified residue" description="Phosphothreonine" evidence="17">
    <location>
        <position position="1120"/>
    </location>
</feature>
<feature type="modified residue" description="Phosphoserine" evidence="17">
    <location>
        <position position="1292"/>
    </location>
</feature>
<feature type="modified residue" description="Phosphoserine" evidence="17">
    <location>
        <position position="1302"/>
    </location>
</feature>
<feature type="modified residue" description="Phosphoserine" evidence="17">
    <location>
        <position position="1303"/>
    </location>
</feature>
<feature type="modified residue" description="Phosphoserine" evidence="17">
    <location>
        <position position="1332"/>
    </location>
</feature>
<feature type="modified residue" description="Phosphoserine" evidence="17">
    <location>
        <position position="1334"/>
    </location>
</feature>
<feature type="modified residue" description="Phosphoserine" evidence="17">
    <location>
        <position position="1337"/>
    </location>
</feature>
<feature type="modified residue" description="Phosphoserine" evidence="17">
    <location>
        <position position="1338"/>
    </location>
</feature>
<feature type="modified residue" description="Phosphoserine" evidence="17">
    <location>
        <position position="1341"/>
    </location>
</feature>
<feature type="modified residue" description="Phosphoserine" evidence="17">
    <location>
        <position position="1439"/>
    </location>
</feature>
<feature type="modified residue" description="Phosphoserine" evidence="17">
    <location>
        <position position="1451"/>
    </location>
</feature>
<feature type="modified residue" description="Phosphoserine" evidence="17">
    <location>
        <position position="1452"/>
    </location>
</feature>
<feature type="modified residue" description="Phosphoserine" evidence="17">
    <location>
        <position position="1454"/>
    </location>
</feature>
<feature type="modified residue" description="Phosphoserine" evidence="17">
    <location>
        <position position="1457"/>
    </location>
</feature>
<feature type="modified residue" description="Phosphoserine" evidence="17">
    <location>
        <position position="1481"/>
    </location>
</feature>
<feature type="modified residue" description="Phosphoserine" evidence="17">
    <location>
        <position position="1484"/>
    </location>
</feature>
<feature type="modified residue" description="Phosphoserine" evidence="1">
    <location>
        <position position="1505"/>
    </location>
</feature>
<feature type="modified residue" description="Phosphoserine" evidence="1">
    <location>
        <position position="1507"/>
    </location>
</feature>
<feature type="modified residue" description="Phosphothreonine" evidence="17">
    <location>
        <position position="1552"/>
    </location>
</feature>
<feature type="modified residue" description="Phosphoserine" evidence="17">
    <location>
        <position position="1553"/>
    </location>
</feature>
<feature type="modified residue" description="Phosphoserine" evidence="17">
    <location>
        <position position="1563"/>
    </location>
</feature>
<feature type="modified residue" description="Phosphoserine" evidence="17">
    <location>
        <position position="1575"/>
    </location>
</feature>
<feature type="modified residue" description="Phosphoserine" evidence="1">
    <location>
        <position position="1638"/>
    </location>
</feature>
<feature type="modified residue" description="Phosphothreonine" evidence="1">
    <location>
        <position position="1640"/>
    </location>
</feature>
<feature type="modified residue" description="Phosphoserine" evidence="17">
    <location>
        <position position="1642"/>
    </location>
</feature>
<feature type="modified residue" description="Phosphoserine" evidence="17">
    <location>
        <position position="1647"/>
    </location>
</feature>
<feature type="modified residue" description="Phosphoserine" evidence="17">
    <location>
        <position position="1708"/>
    </location>
</feature>
<feature type="modified residue" description="Phosphoserine" evidence="17">
    <location>
        <position position="1709"/>
    </location>
</feature>
<feature type="modified residue" description="Phosphothreonine" evidence="17">
    <location>
        <position position="1760"/>
    </location>
</feature>
<feature type="modified residue" description="Phosphoserine" evidence="16 17">
    <location>
        <position position="1766"/>
    </location>
</feature>
<feature type="modified residue" description="Phosphoserine" evidence="17">
    <location>
        <position position="1795"/>
    </location>
</feature>
<feature type="modified residue" description="Phosphoserine" evidence="17">
    <location>
        <position position="1800"/>
    </location>
</feature>
<feature type="modified residue" description="Phosphoserine" evidence="17">
    <location>
        <position position="1808"/>
    </location>
</feature>
<feature type="modified residue" description="Phosphoserine" evidence="17">
    <location>
        <position position="1829"/>
    </location>
</feature>
<feature type="modified residue" description="Phosphoserine" evidence="17">
    <location>
        <position position="2495"/>
    </location>
</feature>
<feature type="modified residue" description="Phosphothreonine" evidence="17">
    <location>
        <position position="2998"/>
    </location>
</feature>
<feature type="modified residue" description="Phosphoserine" evidence="16">
    <location>
        <position position="3358"/>
    </location>
</feature>
<feature type="modified residue" description="Phosphoserine" evidence="17">
    <location>
        <position position="3372"/>
    </location>
</feature>
<feature type="modified residue" description="Phosphothreonine" evidence="16 17">
    <location>
        <position position="3376"/>
    </location>
</feature>
<feature type="modified residue" description="Phosphothreonine" evidence="17">
    <location>
        <position position="3403"/>
    </location>
</feature>
<feature type="modified residue" description="Phosphoserine" evidence="17">
    <location>
        <position position="3506"/>
    </location>
</feature>
<feature type="modified residue" description="Phosphoserine" evidence="17">
    <location>
        <position position="3514"/>
    </location>
</feature>
<feature type="modified residue" description="Phosphoserine" evidence="17">
    <location>
        <position position="3545"/>
    </location>
</feature>
<feature type="modified residue" description="Phosphoserine" evidence="17">
    <location>
        <position position="3549"/>
    </location>
</feature>
<feature type="modified residue" description="Phosphoserine" evidence="1">
    <location>
        <position position="3555"/>
    </location>
</feature>
<feature type="modified residue" description="Phosphoserine" evidence="17">
    <location>
        <position position="3558"/>
    </location>
</feature>
<feature type="modified residue" description="Phosphoserine" evidence="1">
    <location>
        <position position="3561"/>
    </location>
</feature>
<feature type="modified residue" description="Phosphoserine" evidence="17">
    <location>
        <position position="3582"/>
    </location>
</feature>
<feature type="modified residue" description="Phosphoserine" evidence="1">
    <location>
        <position position="3608"/>
    </location>
</feature>
<feature type="modified residue" description="Phosphoserine" evidence="17">
    <location>
        <position position="3610"/>
    </location>
</feature>
<feature type="modified residue" description="Phosphoserine" evidence="17">
    <location>
        <position position="3616"/>
    </location>
</feature>
<feature type="modified residue" description="Phosphoserine" evidence="1">
    <location>
        <position position="3763"/>
    </location>
</feature>
<feature type="modified residue" description="Phosphoserine" evidence="17">
    <location>
        <position position="4016"/>
    </location>
</feature>
<feature type="modified residue" description="Phosphoserine" evidence="17">
    <location>
        <position position="4042"/>
    </location>
</feature>
<feature type="modified residue" description="Phosphoserine" evidence="17">
    <location>
        <position position="4132"/>
    </location>
</feature>
<feature type="modified residue" description="Phosphoserine" evidence="17">
    <location>
        <position position="4286"/>
    </location>
</feature>
<feature type="modified residue" description="Phosphoserine" evidence="17">
    <location>
        <position position="4290"/>
    </location>
</feature>
<feature type="modified residue" description="Phosphoserine" evidence="17">
    <location>
        <position position="4293"/>
    </location>
</feature>
<feature type="modified residue" description="Phosphoserine" evidence="1">
    <location>
        <position position="4322"/>
    </location>
</feature>
<feature type="modified residue" description="Phosphoserine" evidence="17">
    <location>
        <position position="4358"/>
    </location>
</feature>
<feature type="modified residue" description="Phosphoserine" evidence="17">
    <location>
        <position position="4592"/>
    </location>
</feature>
<feature type="modified residue" description="Phosphoserine" evidence="1">
    <location>
        <position position="4706"/>
    </location>
</feature>
<feature type="glycosylation site" description="O-linked (GlcNAc) threonine" evidence="8">
    <location>
        <position position="2686"/>
    </location>
</feature>
<feature type="glycosylation site" description="O-linked (GlcNAc) serine" evidence="8">
    <location>
        <position position="2960"/>
    </location>
</feature>
<feature type="splice variant" id="VSP_003928" description="In isoform 2." evidence="11 12">
    <original>TKPTN</original>
    <variation>SKRRK</variation>
    <location>
        <begin position="4859"/>
        <end position="4863"/>
    </location>
</feature>
<feature type="splice variant" id="VSP_003929" description="In isoform 2." evidence="11 12">
    <location>
        <begin position="4864"/>
        <end position="5068"/>
    </location>
</feature>
<feature type="sequence conflict" description="In Ref. 1; CAB60731/CAB60732." evidence="13" ref="1">
    <original>D</original>
    <variation>E</variation>
    <location>
        <position position="156"/>
    </location>
</feature>
<feature type="sequence conflict" description="In Ref. 1; CAB60731/CAB60732." evidence="13" ref="1">
    <original>A</original>
    <variation>S</variation>
    <location>
        <position position="366"/>
    </location>
</feature>
<feature type="sequence conflict" description="In Ref. 1; CAB60731/CAB60732 and 3; BAC53723/BAC53724." evidence="13" ref="1 3">
    <original>H</original>
    <variation>Q</variation>
    <location>
        <position position="438"/>
    </location>
</feature>
<feature type="sequence conflict" description="In Ref. 1; CAB60731/CAB60732 and 3; BAC53723/BAC53724." evidence="13" ref="1 3">
    <original>H</original>
    <variation>Q</variation>
    <location>
        <position position="478"/>
    </location>
</feature>
<feature type="sequence conflict" description="In Ref. 1; CAB60731/CAB60732 and 3; BAC53723/BAC53724." evidence="13" ref="1 3">
    <original>P</original>
    <variation>Q</variation>
    <location>
        <position position="923"/>
    </location>
</feature>
<feature type="sequence conflict" description="In Ref. 1; CAB60731/CAB60732." evidence="13" ref="1">
    <original>V</original>
    <variation>A</variation>
    <location>
        <position position="951"/>
    </location>
</feature>
<feature type="sequence conflict" description="In Ref. 1; CAB60731/CAB60732." evidence="13" ref="1">
    <original>P</original>
    <variation>H</variation>
    <location>
        <position position="965"/>
    </location>
</feature>
<feature type="sequence conflict" description="In Ref. 1; CAB60731/CAB60732." evidence="13" ref="1">
    <original>Q</original>
    <variation>P</variation>
    <location>
        <position position="1920"/>
    </location>
</feature>
<feature type="sequence conflict" description="In Ref. 1; CAB60731/CAB60732." evidence="13" ref="1">
    <original>Q</original>
    <variation>R</variation>
    <location>
        <position position="1931"/>
    </location>
</feature>
<feature type="sequence conflict" description="In Ref. 1; CAB60731/CAB60732." evidence="13" ref="1">
    <original>L</original>
    <variation>S</variation>
    <location>
        <position position="2297"/>
    </location>
</feature>
<feature type="sequence conflict" description="In Ref. 3; BAC53723/BAC53724." evidence="13" ref="3">
    <location>
        <begin position="2335"/>
        <end position="2346"/>
    </location>
</feature>
<feature type="sequence conflict" description="In Ref. 1; CAB60731/CAB60732." evidence="13" ref="1">
    <original>E</original>
    <variation>D</variation>
    <location>
        <position position="2855"/>
    </location>
</feature>
<feature type="sequence conflict" description="In Ref. 1; CAB60731/CAB60732." evidence="13" ref="1">
    <original>S</original>
    <variation>P</variation>
    <location>
        <position position="4042"/>
    </location>
</feature>
<feature type="sequence conflict" description="In Ref. 3; BAC53724." evidence="13" ref="3">
    <location>
        <begin position="4670"/>
        <end position="4678"/>
    </location>
</feature>
<feature type="sequence conflict" description="In Ref. 1; CAB60731/CAB60732." evidence="13" ref="1">
    <original>M</original>
    <variation>V</variation>
    <location>
        <position position="5062"/>
    </location>
</feature>
<accession>Q9QYX7</accession>
<accession>E9QK94</accession>
<accession>Q8CF91</accession>
<accession>Q8CF92</accession>
<accession>Q9QYX6</accession>
<accession>Q9QZJ0</accession>
<sequence>MGNEASLEGEGLPEGLAAAAGGAGGSGSALHPGIPAGMEADLSQLSEEERRQIAAVMSRAQGLPKGSVPAAAAESPSMHRKQELDSSQAPQQPGKPPDPGRPPQHGLSKSRTTDTFRSEQKLPGRSPSTISLKESKSRTDFKEEYKSSMMPGFFSDVNPLSAVSSVVNKFNPFDLISDSEAVQEETTKKQKVAQKDQGKSEGITKPSLQQPSPKLIPKQQGPGKEVIPQDIPSKSVSSQQAEKTKPQAPGTAKPSQQSPAQTPAQQAKPVAQQPGPAKATVQQPGPAKSPAQPAGTGKSPAQPPVTAKPPAQQAGLEKTSLQQPGPKSLAQTPGQGKVPPGPAKSPAQQPGTAKLPAQQPGPQTAAKVPGPTKTPAQLSGPGKTPAQQPGPTKPSPQQPIPAKPQPQQPVATKPQPQQPAPAKPQPQHPTPAKPQPQHPTPAKPQPQQPTPAKPQPQQPTPAKPQPQQPTPAKPQPQHPTPAKPQPQQPGLGKPSAQQPSKSISQTVTGRPLQAPPTSAAQAPAQGLSKTICPLCNTTELLLHTPEKANFNTCTECQSTVCSLCGFNPNPHLTEIKEWLCLNCQMQRALGGELAAIPSSPQPTPKAASVQPATASKSPVPSQQASPKKELPSKQDSPKAPESKKPPPLVKQPTLHGPTPATAPQPPVAEALPKPAPPKKPSAALPEQAKAPVADVEPKQPKTTETLTDSPSSAAATSKPAILSSQVQAQAQVTTAPPLKTDSAKTSQSFPPTGDTITPLDSKAMPRPASDSKIVSHPGPTSESKDPVQKKEEPKKAQTKVTPKPDTKPVPKGSPTPSGTRPTTGQATPQSQQPPKPPEQSRRFSLNLGGIADAPKSQPTTPQETVTGKLFGFGASIFSQASNLISTAGQQAPHPQTGPAAPSKQAPPPSQTLAAQGPPKSTGPHPSAPAKTTAVKKETKGPAAENLEAKPVQAPTVKKAEKDKKPPPGKVSKPPPTEPEKAVLAQKPDKTTKPKPACPLCRTELNVGSQDPPNFNTCTECKNQVCNLCGFNPTPHLTEIQEWLCLNCQTQRAISGQLGDMDKMPPASSGPKASPVPAPAEPPPQKTPTAAHAKGKKKETEVKAETEKQIPEKETPSIEKTPPAVATDQKLEESEVTKSLVSVLPEKKPSEEEKALPADKKEKKPPAAEAPPLEEKKPIPDDQKLPPDAKPSASEGEEKRDLLKAHVQIPEEGPIGKVASLACEGEQQPDTRPEDLPGATPQTLPKDRQKESRDVTQPQAEGTAKEGRGEPSKDRTEKEEDKSDTSSSQQPKSPQGLSDTGYSSDGISGSLGEIPSLIPSDEKDLLKGLKKDSFSQESSPSSPSDLAKLESTVLSILEAQASTLVGEKAEKKTQPQKVSPEQPQDQQKTQTPSETRDISISEEEIKESQEKKVTSKKDSAQGFPSRKEHKENPELVDDLSPRRASYDSVEDSSESENSPVARRKRRTSIGSSSSEEYKQEDSQGSGEDEDFIRKQIIEMSADEDASGSEDEEFIRSQLKEIGGVTESQKREETKGKGKSPAGKHRRLTRKSSTSFDDDAGRRHSWHDEDDETFDESPELKFRETKSQESEELVVAGGGGLRRFKTIELNSTVTDKYSAESSQKKTTLYFDEEPELEMESLTDSPEDRSRGEGSSSLHASSFTPGTSPTSVSSLDEDSDSSPSHKKGESKQQRKARHRSHGPLLPTIEDSSEEEELREEEELLKEQEKQRELEQQQRKSSSKKSKKDKDELRAQRRRERPKTPPSNLSPIEDASPTEELRQAAEMEELHRSSCSEYSPSIESDPEGFEISPEKIIEVQKVYKLPTAVSLYSPTDEQSVMQKEGAQKALKSAEEMYEEMMHKPHKYKAFPAANERDEVFEKEPLYGGMLIEDYIYESLVEDTYNGSVDGSLLTRQDEQNGFMQQRGREQKIRLQEQIYDDPMQKITDLQKEFYELESLHSIVPQEDIVSSSYIIPESHEIVDLGSMVTSTSEEKKLLDADAAYEELMKRQQMQVTDGSSLIQTTMGDDMAESTLDFDRVQDASLTSSILSGASLTDSTSSATLSIPDVKITQHFSTEEFEDEYVTDYTREIQEIIAHESLILTYSEPSESATSVPPSDTPSLTSSISSVCTTDSSSPVTTLDSLTTVYTEPADVITKFKDSEEISSTYFPGSVIDYPEDIGVSLDRTITPESRTNADQIMISFPGIAPSITESVATKPERPQADTISTDLPISEKELIKGKKETGDGIILEVLDAYKDKREESEAELTKISLPETGLAPTPSSQTKEQPGSPHSVSGEILGQEKPTYRSPSGGLPVSTHPSKSHPFFRSSSLDISAQPPPPPPPPPPPPPPPPPPPPPPLPPATSPKPPTYPKRKLAAAAPVAPTAIVTAHADAIPTVEATAARRSNGLPATKICAAAPPPVPPKPSSIPTGLVFTHRPEASKPPIAPKPAVPEIPVTTQKTTDTCPKPTGLPLTSNMSLNLVTSADYKLPSPTSPLSPHSNKSSPRYSKSLMETYVVITLPSEPGTPTDSSAAQAITSWPLGSPPKDLVSLETVFSVVPPMTSTEIPSASQPTLYTSGALGTFSVTPAVTASLFQTVPTSLTQFLPAEASKPEVSAVSSAVPSVAPRSVSIPIPPEPLALDRHQYKENGKLPLIGDAIDLRTIPKSEVKVTEKCMDLSASAMDVKRQTTANEVYRRQISAVQPSIINLSAASSLGTPVTMDSKTVAVVTCTDTTIYTTGTESQVGIEHAVTSPLQLTTSKHTELQYRKPSSQAFPMIRDEAPINLSLGPSTQAVTLAVTKPVTVPPVGVTNGWTDSTISQGITDGEVVDLSTSKSHRTVVTMDESTSNVVTKIIEDEEKPVDLTAGRRAVCCDMVYKLPFGRSCTAQQPATTLPEDRFGYRDDHYQYDRSGPYGYRGIGGMKPSMSDTNLAEAGHFFYKSKNAFDYSGGTEAAVDLTSGRVSTGEVMDYSSKTTGPYPETRQVISGVGISTPQYSTARMTPPPGPQYGVGSVLRSSNGVVYSSVATPIPSTFAITTQPGSIFSTTVRDLSGIHTTDAITSLSALHQSQPMPRSYFITTGASETDISVTSIDINASLQTITMETLPAETMDSVPTLTTASEVFSEVVGEESTLLIVPDEDKQQQQLDLERELLELEKIKQQRFAEELEWERQEIQRFREQEKIMVQKKLEELQSMKQHLLYQQEEERQAQFMMRQETLAQQQLQLEQIQQLQQQLHQQLEEQKLRQIYQYNYEPSGTASPQTTTEQAILEGQYVATEGSQFWATEDATTTASTVVAIEIPQSQGWYTVQSDGVTQYIAPPGILSTVSEIPLTDVVVKEEKQPKKRSSGAKVRGQYDEMGESMADDPRNLKKIVDSGVQTDDEETADRTYASRRRRTKKSVDTSVQTDDEDQDEWDMPSRSRRKARTGKYGDSTAEGDKTKPPSKVSSVAVQTVAEISVQTEPLGTIRTPSIRARVDAKVEIIKHISAPEKTYKGGSLGCQTETDPDTQSPPYMGATSPPKDKKRPTPLEIGYSSSHLRADPTVQLAPSPPKSPKVLYSPISPLSPGHALEPAFVPYEKPLPDDISPQKVLHPDMAKVPPASPKTAKMMQRSMSDPKPLSPTADESSRAPFQYSEGFTAKGSQTTSGTQKKVKRTLPNPPPEEASTGTQSTYSTMGTASRRRMCRTNTMARAKILQDIDRELDLVERESAKLRKKQAELDEEEKEIDAKLRYLEMGINRRKEALLKEREKRERAYLQGVAEDRDYMSDSEVSSTRPSRVESQHGIERPRTAPQTEFSQFIPPQTQTEAQLVPPTSPYTQYQYSSPALPTQAPTPYTQQSHFQQQTLYHQQVSPYQTQPTFQAVATMSFTPQAQPTPTPQPSYQLPSQMMVIQQKPRQTTLYLEPKITSTYEVIRNQPLMIAPVSTDNTYAVSHLGSKYNSLDLRIGLEERSSMASSPISSISADSFYADIDHHTSRNYVLIDDIGDITKGTAALSSAFSLHEKDLSKTDRLLRTTETRRSQEVTDFLAPLQTSSRLHSYVKAEEDSMEDPYELKLLKHQIKQEFRRGTESLDHLAGLSHYYHADTSYRHFPKSEKYSISRLTLEKQAAKQLPAAILYQKQSKHKKALIDPKMSKFSPIQESRDLEPDYPTYLSSSTSSIGGISSRARLLQDDITFGLRKNITDQQKFMGSSLGSGLGTLGNTIRSALQDEADKPYSSGSRSRPSSRPSSVYGLDLSIKRDSSSSSLRLKAQEAEALDVSFGHSSSSARTKPTSLPISQSRGRIPIVAQNSEEESPLSPVGQPMGMARAAAGPLPPISADTRDQFGSSHSLPEVQQHMREESRTRGYDRDIAFIMDDFQHAMSDSEAYHLRREETDWFDKPRESRLENGHGLDRKLPERLVHSRPLSQHQEQILQMNGKTMHYIFPHARIKITRDSKDHTVSGNGLGIRIVGGKEIPGHSGEIGAYIAKILPGGSAEHSGKLIEGMQVLEWNGIPLTSKTYEEVQSIINQQSGEAEICVRLDLNMLSDSENPQHLELHEPPKVVDKAKSPGVDPKQLAAELQKVSLQQSPLVMSSVVEKGAHAHSGPTSAGSSSVPSPGQPGSPSVSKKKHGGSKPTDVSKTASHPITGEIQLQINYDLGNLIIHILQARNLVPRDNNGYSDPFVKVYLLPGRGQVMVVQNASVEYKRRTKYVQKSLNPEWNQTVIYKSISMEQLMKKTLEVTVWDYDRFSSNDFLGEVLIDLSSTSHLDNTPRWYPLKEQTESIEHGKSHSSQNSQQSPKPSVIKSRSHGIFPDPSKDMQVPTIEKSHSSPGSSKSSSEGHLRSHGPSRSQSKTSVAQTHLEDAGAAIAAAEAAVQQLRIQPTKPTNHRPAETSVSTGSSGSSVGSGYSVDSEGSSCVAGEPNLLPIPRIGKMGQNGQDPVKQPGMGAADTEAKTQVMGEIKLALKKEMKTDGEQLIVEILQCRNITYKFKSPDHLPDLYVKIYVINIATQKKVIKKKTRVCRHDREPSFNETFRFSLSPAGHSLQILLFSNGGKFMKKTLIGEACIWLDKVDLRKRIVNWHKLLMSPTQTH</sequence>
<name>PCLO_MOUSE</name>
<evidence type="ECO:0000250" key="1">
    <source>
        <dbReference type="UniProtKB" id="Q9JKS6"/>
    </source>
</evidence>
<evidence type="ECO:0000255" key="2"/>
<evidence type="ECO:0000255" key="3">
    <source>
        <dbReference type="PROSITE-ProRule" id="PRU00041"/>
    </source>
</evidence>
<evidence type="ECO:0000255" key="4">
    <source>
        <dbReference type="PROSITE-ProRule" id="PRU00143"/>
    </source>
</evidence>
<evidence type="ECO:0000256" key="5">
    <source>
        <dbReference type="SAM" id="MobiDB-lite"/>
    </source>
</evidence>
<evidence type="ECO:0000269" key="6">
    <source>
    </source>
</evidence>
<evidence type="ECO:0000269" key="7">
    <source>
    </source>
</evidence>
<evidence type="ECO:0000269" key="8">
    <source>
    </source>
</evidence>
<evidence type="ECO:0000269" key="9">
    <source>
    </source>
</evidence>
<evidence type="ECO:0000269" key="10">
    <source>
    </source>
</evidence>
<evidence type="ECO:0000303" key="11">
    <source>
    </source>
</evidence>
<evidence type="ECO:0000303" key="12">
    <source>
    </source>
</evidence>
<evidence type="ECO:0000305" key="13"/>
<evidence type="ECO:0000312" key="14">
    <source>
        <dbReference type="EMBL" id="CAB60731.2"/>
    </source>
</evidence>
<evidence type="ECO:0000312" key="15">
    <source>
        <dbReference type="MGI" id="MGI:1349390"/>
    </source>
</evidence>
<evidence type="ECO:0007744" key="16">
    <source>
    </source>
</evidence>
<evidence type="ECO:0007744" key="17">
    <source>
    </source>
</evidence>
<reference evidence="13" key="1">
    <citation type="journal article" date="1999" name="J. Cell Biol.">
        <title>Aczonin, a 550-kd putative scaffolding protein of presynaptic active zones, shares homology regions with rim and bassoon and binds profilin.</title>
        <authorList>
            <person name="Wang X."/>
            <person name="Kibschull M."/>
            <person name="Laue M.M."/>
            <person name="Lichte B."/>
            <person name="Petrasch-Parwez E."/>
            <person name="Kilimann M.W."/>
        </authorList>
    </citation>
    <scope>NUCLEOTIDE SEQUENCE [MRNA] (ISOFORMS 1 AND 2)</scope>
    <scope>FUNCTION</scope>
    <scope>SUBCELLULAR LOCATION</scope>
    <scope>ALTERNATIVE SPLICING</scope>
    <scope>TISSUE SPECIFICITY</scope>
    <scope>INTERACTION WITH PROFILIN</scope>
    <source>
        <tissue>Brain</tissue>
    </source>
</reference>
<reference evidence="13" key="2">
    <citation type="submission" date="2001-08" db="EMBL/GenBank/DDBJ databases">
        <authorList>
            <person name="Kilimann M.W."/>
        </authorList>
    </citation>
    <scope>SEQUENCE REVISION</scope>
</reference>
<reference key="3">
    <citation type="journal article" date="2002" name="J. Biol. Chem.">
        <title>Piccolo, a Ca2+ sensor in pancreatic beta-cells. Involvement of cAMP-GEFII.Rim2.Piccolo complex in cAMP-dependent exocytosis.</title>
        <authorList>
            <person name="Fujimoto K."/>
            <person name="Shibasaki T."/>
            <person name="Yokoi N."/>
            <person name="Kashima Y."/>
            <person name="Matsumoto M."/>
            <person name="Sasaki T."/>
            <person name="Tajima N."/>
            <person name="Iwanaga T."/>
            <person name="Seino S."/>
        </authorList>
    </citation>
    <scope>NUCLEOTIDE SEQUENCE [MRNA] (ISOFORMS 1 AND 2)</scope>
    <scope>TISSUE SPECIFICITY</scope>
    <scope>INTERACTION WITH RIMS2</scope>
</reference>
<reference key="4">
    <citation type="journal article" date="2009" name="PLoS Biol.">
        <title>Lineage-specific biology revealed by a finished genome assembly of the mouse.</title>
        <authorList>
            <person name="Church D.M."/>
            <person name="Goodstadt L."/>
            <person name="Hillier L.W."/>
            <person name="Zody M.C."/>
            <person name="Goldstein S."/>
            <person name="She X."/>
            <person name="Bult C.J."/>
            <person name="Agarwala R."/>
            <person name="Cherry J.L."/>
            <person name="DiCuccio M."/>
            <person name="Hlavina W."/>
            <person name="Kapustin Y."/>
            <person name="Meric P."/>
            <person name="Maglott D."/>
            <person name="Birtle Z."/>
            <person name="Marques A.C."/>
            <person name="Graves T."/>
            <person name="Zhou S."/>
            <person name="Teague B."/>
            <person name="Potamousis K."/>
            <person name="Churas C."/>
            <person name="Place M."/>
            <person name="Herschleb J."/>
            <person name="Runnheim R."/>
            <person name="Forrest D."/>
            <person name="Amos-Landgraf J."/>
            <person name="Schwartz D.C."/>
            <person name="Cheng Z."/>
            <person name="Lindblad-Toh K."/>
            <person name="Eichler E.E."/>
            <person name="Ponting C.P."/>
        </authorList>
    </citation>
    <scope>NUCLEOTIDE SEQUENCE [LARGE SCALE GENOMIC DNA]</scope>
    <source>
        <strain>C57BL/6J</strain>
    </source>
</reference>
<reference evidence="13" key="5">
    <citation type="submission" date="1999-10" db="EMBL/GenBank/DDBJ databases">
        <title>Mus musculus brain-derived reactive mRNA.</title>
        <authorList>
            <person name="Huang W."/>
            <person name="Jin W."/>
            <person name="Huang C."/>
            <person name="Chen B."/>
            <person name="Zhang J."/>
            <person name="Ju G."/>
        </authorList>
    </citation>
    <scope>NUCLEOTIDE SEQUENCE [MRNA] OF 4532-4712</scope>
    <source>
        <tissue>Brain</tissue>
    </source>
</reference>
<reference key="6">
    <citation type="journal article" date="2006" name="Mol. Cell. Proteomics">
        <title>Comprehensive identification of phosphorylation sites in postsynaptic density preparations.</title>
        <authorList>
            <person name="Trinidad J.C."/>
            <person name="Specht C.G."/>
            <person name="Thalhammer A."/>
            <person name="Schoepfer R."/>
            <person name="Burlingame A.L."/>
        </authorList>
    </citation>
    <scope>PHOSPHORYLATION [LARGE SCALE ANALYSIS] AT SER-1766; SER-3358 AND THR-3376</scope>
    <scope>IDENTIFICATION BY MASS SPECTROMETRY [LARGE SCALE ANALYSIS]</scope>
    <source>
        <tissue>Brain</tissue>
    </source>
</reference>
<reference key="7">
    <citation type="journal article" date="2006" name="Mol. Cell. Proteomics">
        <title>O-linked N-acetylglucosamine proteomics of postsynaptic density preparations using lectin weak affinity chromatography and mass spectrometry.</title>
        <authorList>
            <person name="Vosseller K."/>
            <person name="Trinidad J.C."/>
            <person name="Chalkley R.J."/>
            <person name="Specht C.G."/>
            <person name="Thalhammer A."/>
            <person name="Lynn A.J."/>
            <person name="Snedecor J.O."/>
            <person name="Guan S."/>
            <person name="Medzihradszky K.F."/>
            <person name="Maltby D.A."/>
            <person name="Schoepfer R."/>
            <person name="Burlingame A.L."/>
        </authorList>
    </citation>
    <scope>GLYCOSYLATION [LARGE SCALE ANALYSIS] AT THR-2686 AND SER-2960</scope>
    <source>
        <tissue>Brain</tissue>
    </source>
</reference>
<reference key="8">
    <citation type="journal article" date="2007" name="Mol. Cell. Proteomics">
        <title>Qualitative and quantitative analyses of protein phosphorylation in naive and stimulated mouse synaptosomal preparations.</title>
        <authorList>
            <person name="Munton R.P."/>
            <person name="Tweedie-Cullen R."/>
            <person name="Livingstone-Zatchej M."/>
            <person name="Weinandy F."/>
            <person name="Waidelich M."/>
            <person name="Longo D."/>
            <person name="Gehrig P."/>
            <person name="Potthast F."/>
            <person name="Rutishauser D."/>
            <person name="Gerrits B."/>
            <person name="Panse C."/>
            <person name="Schlapbach R."/>
            <person name="Mansuy I.M."/>
        </authorList>
    </citation>
    <scope>IDENTIFICATION BY MASS SPECTROMETRY [LARGE SCALE ANALYSIS]</scope>
    <source>
        <tissue>Brain cortex</tissue>
    </source>
</reference>
<reference key="9">
    <citation type="journal article" date="2008" name="J. Proteome Res.">
        <title>Large-scale identification and evolution indexing of tyrosine phosphorylation sites from murine brain.</title>
        <authorList>
            <person name="Ballif B.A."/>
            <person name="Carey G.R."/>
            <person name="Sunyaev S.R."/>
            <person name="Gygi S.P."/>
        </authorList>
    </citation>
    <scope>IDENTIFICATION BY MASS SPECTROMETRY [LARGE SCALE ANALYSIS]</scope>
    <source>
        <tissue>Brain</tissue>
    </source>
</reference>
<reference key="10">
    <citation type="journal article" date="2009" name="J. Neurosci.">
        <title>A protein interaction node at the neurotransmitter release site: domains of Aczonin/Piccolo, Bassoon, CAST, and rim converge on the N-terminal domain of Munc13-1.</title>
        <authorList>
            <person name="Wang X."/>
            <person name="Hu B."/>
            <person name="Zieba A."/>
            <person name="Neumann N.G."/>
            <person name="Kasper-Sonnenberg M."/>
            <person name="Honsbein A."/>
            <person name="Hultqvist G."/>
            <person name="Conze T."/>
            <person name="Witt W."/>
            <person name="Limbach C."/>
            <person name="Geitmann M."/>
            <person name="Danielson H."/>
            <person name="Kolarow R."/>
            <person name="Niemann G."/>
            <person name="Lessmann V."/>
            <person name="Kilimann M.W."/>
        </authorList>
    </citation>
    <scope>FUNCTION</scope>
    <scope>INTERACTION WITH BCN</scope>
    <scope>ERC2/CAST1</scope>
    <scope>RIMS1 AND UNC13A</scope>
    <scope>TISSUE SPECIFICITY</scope>
</reference>
<reference key="11">
    <citation type="journal article" date="2010" name="Cell">
        <title>A tissue-specific atlas of mouse protein phosphorylation and expression.</title>
        <authorList>
            <person name="Huttlin E.L."/>
            <person name="Jedrychowski M.P."/>
            <person name="Elias J.E."/>
            <person name="Goswami T."/>
            <person name="Rad R."/>
            <person name="Beausoleil S.A."/>
            <person name="Villen J."/>
            <person name="Haas W."/>
            <person name="Sowa M.E."/>
            <person name="Gygi S.P."/>
        </authorList>
    </citation>
    <scope>PHOSPHORYLATION [LARGE SCALE ANALYSIS] AT SER-212; SER-844; SER-856; THR-860; THR-1120; SER-1292; SER-1302; SER-1303; SER-1332; SER-1334; SER-1337; SER-1338; SER-1341; SER-1439; SER-1451; SER-1452; SER-1454; SER-1457; SER-1481; SER-1484; THR-1552; SER-1553; SER-1563; SER-1575; SER-1642; SER-1647; SER-1708; SER-1709; THR-1760; SER-1766; SER-1795; SER-1800; SER-1808; SER-1829; SER-2495; THR-2998; SER-3372; THR-3376; THR-3403; SER-3506; SER-3514; SER-3545; SER-3549; SER-3558; SER-3582; SER-3610; SER-3616; SER-4016; SER-4042; SER-4132; SER-4286; SER-4290; SER-4293; SER-4358 AND SER-4592</scope>
    <scope>IDENTIFICATION BY MASS SPECTROMETRY [LARGE SCALE ANALYSIS]</scope>
    <source>
        <tissue>Brain</tissue>
    </source>
</reference>
<reference key="12">
    <citation type="journal article" date="2017" name="Neuron">
        <title>Bassoon Controls Presynaptic Autophagy through Atg5.</title>
        <authorList>
            <person name="Okerlund N.D."/>
            <person name="Schneider K."/>
            <person name="Leal-Ortiz S."/>
            <person name="Montenegro-Venegas C."/>
            <person name="Kim S.A."/>
            <person name="Garner L.C."/>
            <person name="Waites C.L."/>
            <person name="Gundelfinger E.D."/>
            <person name="Reimer R.J."/>
            <person name="Garner C.C."/>
        </authorList>
    </citation>
    <scope>FUNCTION</scope>
    <scope>DISRUPTION PHENOTYPE</scope>
</reference>
<organism evidence="14">
    <name type="scientific">Mus musculus</name>
    <name type="common">Mouse</name>
    <dbReference type="NCBI Taxonomy" id="10090"/>
    <lineage>
        <taxon>Eukaryota</taxon>
        <taxon>Metazoa</taxon>
        <taxon>Chordata</taxon>
        <taxon>Craniata</taxon>
        <taxon>Vertebrata</taxon>
        <taxon>Euteleostomi</taxon>
        <taxon>Mammalia</taxon>
        <taxon>Eutheria</taxon>
        <taxon>Euarchontoglires</taxon>
        <taxon>Glires</taxon>
        <taxon>Rodentia</taxon>
        <taxon>Myomorpha</taxon>
        <taxon>Muroidea</taxon>
        <taxon>Muridae</taxon>
        <taxon>Murinae</taxon>
        <taxon>Mus</taxon>
        <taxon>Mus</taxon>
    </lineage>
</organism>
<proteinExistence type="evidence at protein level"/>